<sequence>MSAEPHPLYRQLPAIDRLLNEPEMAPLLAEYGPVLLADTLRQLQAEAREYIGQFHTLADWCADWPAALRQRLNQRQPALKPVFNLTGTVLHTNLGRAPLAESAIAAVTDAMRSAVTLEYSLEGAGRGHRDRAVADLLCALTGAEDACIVNNNAAAVFLLLTVMAAGKQVVVSRGELVEIGGAFRIPDVMRQAGCDLVEVGTTNRTHLKDYRQAINENTGLLMKVHTSNYSIEGFTAAVSEQQLAALGQECSIPTATDLGSGSLVDMTRYGLPAEPMPQQLIAAGVDLVTFSGDKLLGGPQAGIILGKKQWIERLQQHPLKRALRADKMTLAALDATLRLYQQPDRLVEQLPSLRLLTRPASEIAACAQRLLAPLIACYGTDFTLDIESCWSQIGSGSLPVDRLPSWALTFTPKDGRGSTLEALTARWRTLTKPVIGRVADGRLWLDLRCLEDEAALLRELAS</sequence>
<accession>A7FP80</accession>
<name>SELA_YERP3</name>
<feature type="chain" id="PRO_1000060101" description="L-seryl-tRNA(Sec) selenium transferase">
    <location>
        <begin position="1"/>
        <end position="462"/>
    </location>
</feature>
<feature type="modified residue" description="N6-(pyridoxal phosphate)lysine" evidence="1">
    <location>
        <position position="294"/>
    </location>
</feature>
<evidence type="ECO:0000255" key="1">
    <source>
        <dbReference type="HAMAP-Rule" id="MF_00423"/>
    </source>
</evidence>
<protein>
    <recommendedName>
        <fullName evidence="1">L-seryl-tRNA(Sec) selenium transferase</fullName>
        <ecNumber evidence="1">2.9.1.1</ecNumber>
    </recommendedName>
    <alternativeName>
        <fullName evidence="1">Selenocysteine synthase</fullName>
        <shortName evidence="1">Sec synthase</shortName>
    </alternativeName>
    <alternativeName>
        <fullName evidence="1">Selenocysteinyl-tRNA(Sec) synthase</fullName>
    </alternativeName>
</protein>
<proteinExistence type="inferred from homology"/>
<organism>
    <name type="scientific">Yersinia pseudotuberculosis serotype O:1b (strain IP 31758)</name>
    <dbReference type="NCBI Taxonomy" id="349747"/>
    <lineage>
        <taxon>Bacteria</taxon>
        <taxon>Pseudomonadati</taxon>
        <taxon>Pseudomonadota</taxon>
        <taxon>Gammaproteobacteria</taxon>
        <taxon>Enterobacterales</taxon>
        <taxon>Yersiniaceae</taxon>
        <taxon>Yersinia</taxon>
    </lineage>
</organism>
<gene>
    <name evidence="1" type="primary">selA</name>
    <name type="ordered locus">YpsIP31758_4115</name>
</gene>
<reference key="1">
    <citation type="journal article" date="2007" name="PLoS Genet.">
        <title>The complete genome sequence of Yersinia pseudotuberculosis IP31758, the causative agent of Far East scarlet-like fever.</title>
        <authorList>
            <person name="Eppinger M."/>
            <person name="Rosovitz M.J."/>
            <person name="Fricke W.F."/>
            <person name="Rasko D.A."/>
            <person name="Kokorina G."/>
            <person name="Fayolle C."/>
            <person name="Lindler L.E."/>
            <person name="Carniel E."/>
            <person name="Ravel J."/>
        </authorList>
    </citation>
    <scope>NUCLEOTIDE SEQUENCE [LARGE SCALE GENOMIC DNA]</scope>
    <source>
        <strain>IP 31758</strain>
    </source>
</reference>
<comment type="function">
    <text evidence="1">Converts seryl-tRNA(Sec) to selenocysteinyl-tRNA(Sec) required for selenoprotein biosynthesis.</text>
</comment>
<comment type="catalytic activity">
    <reaction evidence="1">
        <text>L-seryl-tRNA(Sec) + selenophosphate + H(+) = L-selenocysteinyl-tRNA(Sec) + phosphate</text>
        <dbReference type="Rhea" id="RHEA:22728"/>
        <dbReference type="Rhea" id="RHEA-COMP:9742"/>
        <dbReference type="Rhea" id="RHEA-COMP:9743"/>
        <dbReference type="ChEBI" id="CHEBI:15378"/>
        <dbReference type="ChEBI" id="CHEBI:16144"/>
        <dbReference type="ChEBI" id="CHEBI:43474"/>
        <dbReference type="ChEBI" id="CHEBI:78533"/>
        <dbReference type="ChEBI" id="CHEBI:78573"/>
        <dbReference type="EC" id="2.9.1.1"/>
    </reaction>
</comment>
<comment type="cofactor">
    <cofactor evidence="1">
        <name>pyridoxal 5'-phosphate</name>
        <dbReference type="ChEBI" id="CHEBI:597326"/>
    </cofactor>
</comment>
<comment type="pathway">
    <text evidence="1">Aminoacyl-tRNA biosynthesis; selenocysteinyl-tRNA(Sec) biosynthesis; selenocysteinyl-tRNA(Sec) from L-seryl-tRNA(Sec) (bacterial route): step 1/1.</text>
</comment>
<comment type="subunit">
    <text evidence="1">Homodecamer; pentamer of dimers. Binds only one seryl-tRNA(Sec) per dimer.</text>
</comment>
<comment type="subcellular location">
    <subcellularLocation>
        <location evidence="1">Cytoplasm</location>
    </subcellularLocation>
</comment>
<comment type="similarity">
    <text evidence="1">Belongs to the SelA family.</text>
</comment>
<dbReference type="EC" id="2.9.1.1" evidence="1"/>
<dbReference type="EMBL" id="CP000720">
    <property type="protein sequence ID" value="ABS46082.1"/>
    <property type="molecule type" value="Genomic_DNA"/>
</dbReference>
<dbReference type="RefSeq" id="WP_011193344.1">
    <property type="nucleotide sequence ID" value="NC_009708.1"/>
</dbReference>
<dbReference type="SMR" id="A7FP80"/>
<dbReference type="GeneID" id="49784097"/>
<dbReference type="KEGG" id="ypi:YpsIP31758_4115"/>
<dbReference type="HOGENOM" id="CLU_038142_1_0_6"/>
<dbReference type="UniPathway" id="UPA00906">
    <property type="reaction ID" value="UER00896"/>
</dbReference>
<dbReference type="Proteomes" id="UP000002412">
    <property type="component" value="Chromosome"/>
</dbReference>
<dbReference type="GO" id="GO:0005737">
    <property type="term" value="C:cytoplasm"/>
    <property type="evidence" value="ECO:0007669"/>
    <property type="project" value="UniProtKB-SubCell"/>
</dbReference>
<dbReference type="GO" id="GO:0004125">
    <property type="term" value="F:L-seryl-tRNA(Sec) selenium transferase activity"/>
    <property type="evidence" value="ECO:0007669"/>
    <property type="project" value="UniProtKB-UniRule"/>
</dbReference>
<dbReference type="GO" id="GO:0001717">
    <property type="term" value="P:conversion of seryl-tRNAsec to selenocys-tRNAsec"/>
    <property type="evidence" value="ECO:0007669"/>
    <property type="project" value="UniProtKB-UniRule"/>
</dbReference>
<dbReference type="GO" id="GO:0001514">
    <property type="term" value="P:selenocysteine incorporation"/>
    <property type="evidence" value="ECO:0007669"/>
    <property type="project" value="UniProtKB-UniRule"/>
</dbReference>
<dbReference type="FunFam" id="3.40.640.10:FF:000028">
    <property type="entry name" value="L-seryl-tRNA(Sec) selenium transferase"/>
    <property type="match status" value="1"/>
</dbReference>
<dbReference type="Gene3D" id="3.90.1150.180">
    <property type="match status" value="1"/>
</dbReference>
<dbReference type="Gene3D" id="3.40.640.10">
    <property type="entry name" value="Type I PLP-dependent aspartate aminotransferase-like (Major domain)"/>
    <property type="match status" value="1"/>
</dbReference>
<dbReference type="HAMAP" id="MF_00423">
    <property type="entry name" value="SelA"/>
    <property type="match status" value="1"/>
</dbReference>
<dbReference type="InterPro" id="IPR015424">
    <property type="entry name" value="PyrdxlP-dep_Trfase"/>
</dbReference>
<dbReference type="InterPro" id="IPR015421">
    <property type="entry name" value="PyrdxlP-dep_Trfase_major"/>
</dbReference>
<dbReference type="InterPro" id="IPR018319">
    <property type="entry name" value="SelA-like"/>
</dbReference>
<dbReference type="InterPro" id="IPR004534">
    <property type="entry name" value="SelA_trans"/>
</dbReference>
<dbReference type="InterPro" id="IPR025862">
    <property type="entry name" value="SelA_trans_N_dom"/>
</dbReference>
<dbReference type="NCBIfam" id="TIGR00474">
    <property type="entry name" value="selA"/>
    <property type="match status" value="1"/>
</dbReference>
<dbReference type="PANTHER" id="PTHR32328">
    <property type="entry name" value="L-SERYL-TRNA(SEC) SELENIUM TRANSFERASE"/>
    <property type="match status" value="1"/>
</dbReference>
<dbReference type="PANTHER" id="PTHR32328:SF0">
    <property type="entry name" value="L-SERYL-TRNA(SEC) SELENIUM TRANSFERASE"/>
    <property type="match status" value="1"/>
</dbReference>
<dbReference type="Pfam" id="PF12390">
    <property type="entry name" value="Se-cys_synth_N"/>
    <property type="match status" value="1"/>
</dbReference>
<dbReference type="Pfam" id="PF03841">
    <property type="entry name" value="SelA"/>
    <property type="match status" value="1"/>
</dbReference>
<dbReference type="SUPFAM" id="SSF53383">
    <property type="entry name" value="PLP-dependent transferases"/>
    <property type="match status" value="1"/>
</dbReference>
<keyword id="KW-0963">Cytoplasm</keyword>
<keyword id="KW-0648">Protein biosynthesis</keyword>
<keyword id="KW-0663">Pyridoxal phosphate</keyword>
<keyword id="KW-0711">Selenium</keyword>
<keyword id="KW-0808">Transferase</keyword>